<sequence>MSEPQRPHVVIFTDGACSGNPGPGGWGAILRFGEIEKELKGGENPTTNNRMELLAAISALEALKRSAIVDLTTDSQYVRQGITSWIFNWKKNGWRTSDKKPVKNVDLWQRLDAALKPHEVRWHWIKGHAGHAENERADELAREGLAENR</sequence>
<name>RNH_AFIC5</name>
<evidence type="ECO:0000255" key="1">
    <source>
        <dbReference type="HAMAP-Rule" id="MF_00042"/>
    </source>
</evidence>
<evidence type="ECO:0000255" key="2">
    <source>
        <dbReference type="PROSITE-ProRule" id="PRU00408"/>
    </source>
</evidence>
<gene>
    <name evidence="1" type="primary">rnhA</name>
    <name type="ordered locus">OCAR_7329</name>
    <name type="ordered locus">OCA5_c07890</name>
</gene>
<dbReference type="EC" id="3.1.26.4" evidence="1"/>
<dbReference type="EMBL" id="CP001196">
    <property type="protein sequence ID" value="ACI94433.1"/>
    <property type="molecule type" value="Genomic_DNA"/>
</dbReference>
<dbReference type="EMBL" id="CP002826">
    <property type="protein sequence ID" value="AEI05511.1"/>
    <property type="molecule type" value="Genomic_DNA"/>
</dbReference>
<dbReference type="RefSeq" id="WP_012564459.1">
    <property type="nucleotide sequence ID" value="NC_015684.1"/>
</dbReference>
<dbReference type="SMR" id="B6JJ39"/>
<dbReference type="STRING" id="504832.OCA5_c07890"/>
<dbReference type="KEGG" id="oca:OCAR_7329"/>
<dbReference type="KEGG" id="ocg:OCA5_c07890"/>
<dbReference type="PATRIC" id="fig|504832.7.peg.834"/>
<dbReference type="eggNOG" id="COG0328">
    <property type="taxonomic scope" value="Bacteria"/>
</dbReference>
<dbReference type="HOGENOM" id="CLU_030894_6_0_5"/>
<dbReference type="OrthoDB" id="7845843at2"/>
<dbReference type="Proteomes" id="UP000007730">
    <property type="component" value="Chromosome"/>
</dbReference>
<dbReference type="GO" id="GO:0005737">
    <property type="term" value="C:cytoplasm"/>
    <property type="evidence" value="ECO:0007669"/>
    <property type="project" value="UniProtKB-SubCell"/>
</dbReference>
<dbReference type="GO" id="GO:0000287">
    <property type="term" value="F:magnesium ion binding"/>
    <property type="evidence" value="ECO:0007669"/>
    <property type="project" value="UniProtKB-UniRule"/>
</dbReference>
<dbReference type="GO" id="GO:0003676">
    <property type="term" value="F:nucleic acid binding"/>
    <property type="evidence" value="ECO:0007669"/>
    <property type="project" value="InterPro"/>
</dbReference>
<dbReference type="GO" id="GO:0004523">
    <property type="term" value="F:RNA-DNA hybrid ribonuclease activity"/>
    <property type="evidence" value="ECO:0007669"/>
    <property type="project" value="UniProtKB-UniRule"/>
</dbReference>
<dbReference type="GO" id="GO:0043137">
    <property type="term" value="P:DNA replication, removal of RNA primer"/>
    <property type="evidence" value="ECO:0007669"/>
    <property type="project" value="TreeGrafter"/>
</dbReference>
<dbReference type="CDD" id="cd09278">
    <property type="entry name" value="RNase_HI_prokaryote_like"/>
    <property type="match status" value="1"/>
</dbReference>
<dbReference type="FunFam" id="3.30.420.10:FF:000008">
    <property type="entry name" value="Ribonuclease H"/>
    <property type="match status" value="1"/>
</dbReference>
<dbReference type="Gene3D" id="3.30.420.10">
    <property type="entry name" value="Ribonuclease H-like superfamily/Ribonuclease H"/>
    <property type="match status" value="1"/>
</dbReference>
<dbReference type="HAMAP" id="MF_00042">
    <property type="entry name" value="RNase_H"/>
    <property type="match status" value="1"/>
</dbReference>
<dbReference type="InterPro" id="IPR050092">
    <property type="entry name" value="RNase_H"/>
</dbReference>
<dbReference type="InterPro" id="IPR012337">
    <property type="entry name" value="RNaseH-like_sf"/>
</dbReference>
<dbReference type="InterPro" id="IPR002156">
    <property type="entry name" value="RNaseH_domain"/>
</dbReference>
<dbReference type="InterPro" id="IPR036397">
    <property type="entry name" value="RNaseH_sf"/>
</dbReference>
<dbReference type="InterPro" id="IPR022892">
    <property type="entry name" value="RNaseHI"/>
</dbReference>
<dbReference type="NCBIfam" id="NF001236">
    <property type="entry name" value="PRK00203.1"/>
    <property type="match status" value="1"/>
</dbReference>
<dbReference type="PANTHER" id="PTHR10642">
    <property type="entry name" value="RIBONUCLEASE H1"/>
    <property type="match status" value="1"/>
</dbReference>
<dbReference type="PANTHER" id="PTHR10642:SF26">
    <property type="entry name" value="RIBONUCLEASE H1"/>
    <property type="match status" value="1"/>
</dbReference>
<dbReference type="Pfam" id="PF00075">
    <property type="entry name" value="RNase_H"/>
    <property type="match status" value="1"/>
</dbReference>
<dbReference type="SUPFAM" id="SSF53098">
    <property type="entry name" value="Ribonuclease H-like"/>
    <property type="match status" value="1"/>
</dbReference>
<dbReference type="PROSITE" id="PS50879">
    <property type="entry name" value="RNASE_H_1"/>
    <property type="match status" value="1"/>
</dbReference>
<keyword id="KW-0963">Cytoplasm</keyword>
<keyword id="KW-0255">Endonuclease</keyword>
<keyword id="KW-0378">Hydrolase</keyword>
<keyword id="KW-0460">Magnesium</keyword>
<keyword id="KW-0479">Metal-binding</keyword>
<keyword id="KW-0540">Nuclease</keyword>
<keyword id="KW-1185">Reference proteome</keyword>
<comment type="function">
    <text evidence="1">Endonuclease that specifically degrades the RNA of RNA-DNA hybrids.</text>
</comment>
<comment type="catalytic activity">
    <reaction evidence="1">
        <text>Endonucleolytic cleavage to 5'-phosphomonoester.</text>
        <dbReference type="EC" id="3.1.26.4"/>
    </reaction>
</comment>
<comment type="cofactor">
    <cofactor evidence="1">
        <name>Mg(2+)</name>
        <dbReference type="ChEBI" id="CHEBI:18420"/>
    </cofactor>
    <text evidence="1">Binds 1 Mg(2+) ion per subunit. May bind a second metal ion at a regulatory site, or after substrate binding.</text>
</comment>
<comment type="subunit">
    <text evidence="1">Monomer.</text>
</comment>
<comment type="subcellular location">
    <subcellularLocation>
        <location evidence="1">Cytoplasm</location>
    </subcellularLocation>
</comment>
<comment type="similarity">
    <text evidence="1">Belongs to the RNase H family.</text>
</comment>
<organism>
    <name type="scientific">Afipia carboxidovorans (strain ATCC 49405 / DSM 1227 / KCTC 32145 / OM5)</name>
    <name type="common">Oligotropha carboxidovorans</name>
    <dbReference type="NCBI Taxonomy" id="504832"/>
    <lineage>
        <taxon>Bacteria</taxon>
        <taxon>Pseudomonadati</taxon>
        <taxon>Pseudomonadota</taxon>
        <taxon>Alphaproteobacteria</taxon>
        <taxon>Hyphomicrobiales</taxon>
        <taxon>Nitrobacteraceae</taxon>
        <taxon>Afipia</taxon>
    </lineage>
</organism>
<protein>
    <recommendedName>
        <fullName evidence="1">Ribonuclease H</fullName>
        <shortName evidence="1">RNase H</shortName>
        <ecNumber evidence="1">3.1.26.4</ecNumber>
    </recommendedName>
</protein>
<reference key="1">
    <citation type="journal article" date="2008" name="J. Bacteriol.">
        <title>Genome sequence of the chemolithoautotrophic bacterium Oligotropha carboxidovorans OM5T.</title>
        <authorList>
            <person name="Paul D."/>
            <person name="Bridges S."/>
            <person name="Burgess S.C."/>
            <person name="Dandass Y."/>
            <person name="Lawrence M.L."/>
        </authorList>
    </citation>
    <scope>NUCLEOTIDE SEQUENCE [LARGE SCALE GENOMIC DNA]</scope>
    <source>
        <strain>ATCC 49405 / DSM 1227 / KCTC 32145 / OM5</strain>
    </source>
</reference>
<reference key="2">
    <citation type="journal article" date="2011" name="J. Bacteriol.">
        <title>Complete genome sequences of the chemolithoautotrophic Oligotropha carboxidovorans strains OM4 and OM5.</title>
        <authorList>
            <person name="Volland S."/>
            <person name="Rachinger M."/>
            <person name="Strittmatter A."/>
            <person name="Daniel R."/>
            <person name="Gottschalk G."/>
            <person name="Meyer O."/>
        </authorList>
    </citation>
    <scope>NUCLEOTIDE SEQUENCE [LARGE SCALE GENOMIC DNA]</scope>
    <source>
        <strain>ATCC 49405 / DSM 1227 / KCTC 32145 / OM5</strain>
    </source>
</reference>
<feature type="chain" id="PRO_1000090905" description="Ribonuclease H">
    <location>
        <begin position="1"/>
        <end position="149"/>
    </location>
</feature>
<feature type="domain" description="RNase H type-1" evidence="2">
    <location>
        <begin position="5"/>
        <end position="146"/>
    </location>
</feature>
<feature type="binding site" evidence="1">
    <location>
        <position position="14"/>
    </location>
    <ligand>
        <name>Mg(2+)</name>
        <dbReference type="ChEBI" id="CHEBI:18420"/>
        <label>1</label>
    </ligand>
</feature>
<feature type="binding site" evidence="1">
    <location>
        <position position="14"/>
    </location>
    <ligand>
        <name>Mg(2+)</name>
        <dbReference type="ChEBI" id="CHEBI:18420"/>
        <label>2</label>
    </ligand>
</feature>
<feature type="binding site" evidence="1">
    <location>
        <position position="52"/>
    </location>
    <ligand>
        <name>Mg(2+)</name>
        <dbReference type="ChEBI" id="CHEBI:18420"/>
        <label>1</label>
    </ligand>
</feature>
<feature type="binding site" evidence="1">
    <location>
        <position position="74"/>
    </location>
    <ligand>
        <name>Mg(2+)</name>
        <dbReference type="ChEBI" id="CHEBI:18420"/>
        <label>1</label>
    </ligand>
</feature>
<feature type="binding site" evidence="1">
    <location>
        <position position="138"/>
    </location>
    <ligand>
        <name>Mg(2+)</name>
        <dbReference type="ChEBI" id="CHEBI:18420"/>
        <label>2</label>
    </ligand>
</feature>
<proteinExistence type="inferred from homology"/>
<accession>B6JJ39</accession>
<accession>F8BZ20</accession>